<protein>
    <recommendedName>
        <fullName>Purine nucleoside phosphorylase ORF3</fullName>
        <ecNumber evidence="2">2.4.2.1</ecNumber>
    </recommendedName>
    <alternativeName>
        <fullName>Adenosine deaminase ORF3</fullName>
        <ecNumber evidence="2">3.5.4.4</ecNumber>
    </alternativeName>
    <alternativeName>
        <fullName evidence="4">ORF3</fullName>
    </alternativeName>
    <alternativeName>
        <fullName>S-methyl-5'-thioadenosine phosphorylase ORF3</fullName>
        <ecNumber evidence="2">2.4.2.28</ecNumber>
    </alternativeName>
</protein>
<organism>
    <name type="scientific">Streptomyces griseus</name>
    <dbReference type="NCBI Taxonomy" id="1911"/>
    <lineage>
        <taxon>Bacteria</taxon>
        <taxon>Bacillati</taxon>
        <taxon>Actinomycetota</taxon>
        <taxon>Actinomycetes</taxon>
        <taxon>Kitasatosporales</taxon>
        <taxon>Streptomycetaceae</taxon>
        <taxon>Streptomyces</taxon>
    </lineage>
</organism>
<feature type="chain" id="PRO_0000163183" description="Purine nucleoside phosphorylase ORF3">
    <location>
        <begin position="1"/>
        <end position="246"/>
    </location>
</feature>
<feature type="binding site" evidence="2">
    <location>
        <position position="71"/>
    </location>
    <ligand>
        <name>Zn(2+)</name>
        <dbReference type="ChEBI" id="CHEBI:29105"/>
        <note>catalytic</note>
    </ligand>
</feature>
<feature type="binding site" evidence="2">
    <location>
        <position position="110"/>
    </location>
    <ligand>
        <name>Zn(2+)</name>
        <dbReference type="ChEBI" id="CHEBI:29105"/>
        <note>catalytic</note>
    </ligand>
</feature>
<feature type="binding site" evidence="2">
    <location>
        <position position="127"/>
    </location>
    <ligand>
        <name>Zn(2+)</name>
        <dbReference type="ChEBI" id="CHEBI:29105"/>
        <note>catalytic</note>
    </ligand>
</feature>
<sequence>MIVQHRTAPVTGSAHFAFTDRWGGVSAAPYGELNLGGAVGDDPAAVGANRERAARHLGLDPAHVVWMNQVHGRDVAVVDGPWGADAEIPAVDAVVTARRGLALAVLTADCTPVLLADPVAGVVGAAHAGRPGLVAGVVSAAVEAMVALGAHPSRITAHTGPAVCGRCYEVPEEMRAEVAGAVPGTWSETSWGTPAVDVTGGVHAQLAALGVTDRHASPFCTLESGDHFSYRRDRTTGRLAGYVWLD</sequence>
<proteinExistence type="inferred from homology"/>
<dbReference type="EC" id="2.4.2.1" evidence="2"/>
<dbReference type="EC" id="3.5.4.4" evidence="2"/>
<dbReference type="EC" id="2.4.2.28" evidence="2"/>
<dbReference type="EMBL" id="U07344">
    <property type="protein sequence ID" value="AAA56890.1"/>
    <property type="molecule type" value="Genomic_DNA"/>
</dbReference>
<dbReference type="RefSeq" id="WP_012381305.1">
    <property type="nucleotide sequence ID" value="NZ_UAVD01000032.1"/>
</dbReference>
<dbReference type="SMR" id="P45496"/>
<dbReference type="STRING" id="1911.GCA_001715295_03626"/>
<dbReference type="OMA" id="GWKGALT"/>
<dbReference type="OrthoDB" id="4279at2"/>
<dbReference type="GO" id="GO:0004000">
    <property type="term" value="F:adenosine deaminase activity"/>
    <property type="evidence" value="ECO:0007669"/>
    <property type="project" value="RHEA"/>
</dbReference>
<dbReference type="GO" id="GO:0005507">
    <property type="term" value="F:copper ion binding"/>
    <property type="evidence" value="ECO:0007669"/>
    <property type="project" value="TreeGrafter"/>
</dbReference>
<dbReference type="GO" id="GO:0016491">
    <property type="term" value="F:oxidoreductase activity"/>
    <property type="evidence" value="ECO:0007669"/>
    <property type="project" value="UniProtKB-KW"/>
</dbReference>
<dbReference type="GO" id="GO:0017061">
    <property type="term" value="F:S-methyl-5-thioadenosine phosphorylase activity"/>
    <property type="evidence" value="ECO:0007669"/>
    <property type="project" value="UniProtKB-EC"/>
</dbReference>
<dbReference type="CDD" id="cd16833">
    <property type="entry name" value="YfiH"/>
    <property type="match status" value="1"/>
</dbReference>
<dbReference type="FunFam" id="3.60.140.10:FF:000003">
    <property type="entry name" value="Polyphenol oxidase"/>
    <property type="match status" value="1"/>
</dbReference>
<dbReference type="Gene3D" id="3.60.140.10">
    <property type="entry name" value="CNF1/YfiH-like putative cysteine hydrolases"/>
    <property type="match status" value="1"/>
</dbReference>
<dbReference type="InterPro" id="IPR003730">
    <property type="entry name" value="Cu_polyphenol_OxRdtase"/>
</dbReference>
<dbReference type="InterPro" id="IPR038371">
    <property type="entry name" value="Cu_polyphenol_OxRdtase_sf"/>
</dbReference>
<dbReference type="InterPro" id="IPR011324">
    <property type="entry name" value="Cytotoxic_necrot_fac-like_cat"/>
</dbReference>
<dbReference type="NCBIfam" id="TIGR00726">
    <property type="entry name" value="peptidoglycan editing factor PgeF"/>
    <property type="match status" value="1"/>
</dbReference>
<dbReference type="PANTHER" id="PTHR30616:SF2">
    <property type="entry name" value="PURINE NUCLEOSIDE PHOSPHORYLASE LACC1"/>
    <property type="match status" value="1"/>
</dbReference>
<dbReference type="PANTHER" id="PTHR30616">
    <property type="entry name" value="UNCHARACTERIZED PROTEIN YFIH"/>
    <property type="match status" value="1"/>
</dbReference>
<dbReference type="Pfam" id="PF02578">
    <property type="entry name" value="Cu-oxidase_4"/>
    <property type="match status" value="1"/>
</dbReference>
<dbReference type="SUPFAM" id="SSF64438">
    <property type="entry name" value="CNF1/YfiH-like putative cysteine hydrolases"/>
    <property type="match status" value="1"/>
</dbReference>
<keyword id="KW-0186">Copper</keyword>
<keyword id="KW-0378">Hydrolase</keyword>
<keyword id="KW-0479">Metal-binding</keyword>
<keyword id="KW-0560">Oxidoreductase</keyword>
<keyword id="KW-0808">Transferase</keyword>
<keyword id="KW-0862">Zinc</keyword>
<comment type="function">
    <text evidence="2">Purine nucleoside enzyme that catalyzes the phosphorolysis of adenosine and inosine nucleosides, yielding D-ribose 1-phosphate and the respective free bases, adenine and hypoxanthine. Also catalyzes the phosphorolysis of S-methyl-5'-thioadenosine into adenine and S-methyl-5-thio-alpha-D-ribose 1-phosphate. Also has adenosine deaminase activity.</text>
</comment>
<comment type="catalytic activity">
    <reaction evidence="2">
        <text>adenosine + phosphate = alpha-D-ribose 1-phosphate + adenine</text>
        <dbReference type="Rhea" id="RHEA:27642"/>
        <dbReference type="ChEBI" id="CHEBI:16335"/>
        <dbReference type="ChEBI" id="CHEBI:16708"/>
        <dbReference type="ChEBI" id="CHEBI:43474"/>
        <dbReference type="ChEBI" id="CHEBI:57720"/>
        <dbReference type="EC" id="2.4.2.1"/>
    </reaction>
    <physiologicalReaction direction="left-to-right" evidence="2">
        <dbReference type="Rhea" id="RHEA:27643"/>
    </physiologicalReaction>
</comment>
<comment type="catalytic activity">
    <reaction evidence="2">
        <text>S-methyl-5'-thioadenosine + phosphate = 5-(methylsulfanyl)-alpha-D-ribose 1-phosphate + adenine</text>
        <dbReference type="Rhea" id="RHEA:11852"/>
        <dbReference type="ChEBI" id="CHEBI:16708"/>
        <dbReference type="ChEBI" id="CHEBI:17509"/>
        <dbReference type="ChEBI" id="CHEBI:43474"/>
        <dbReference type="ChEBI" id="CHEBI:58533"/>
        <dbReference type="EC" id="2.4.2.28"/>
    </reaction>
    <physiologicalReaction direction="left-to-right" evidence="2">
        <dbReference type="Rhea" id="RHEA:11853"/>
    </physiologicalReaction>
</comment>
<comment type="catalytic activity">
    <reaction evidence="2">
        <text>inosine + phosphate = alpha-D-ribose 1-phosphate + hypoxanthine</text>
        <dbReference type="Rhea" id="RHEA:27646"/>
        <dbReference type="ChEBI" id="CHEBI:17368"/>
        <dbReference type="ChEBI" id="CHEBI:17596"/>
        <dbReference type="ChEBI" id="CHEBI:43474"/>
        <dbReference type="ChEBI" id="CHEBI:57720"/>
        <dbReference type="EC" id="2.4.2.1"/>
    </reaction>
    <physiologicalReaction direction="left-to-right" evidence="2">
        <dbReference type="Rhea" id="RHEA:27647"/>
    </physiologicalReaction>
</comment>
<comment type="catalytic activity">
    <reaction evidence="2">
        <text>adenosine + H2O + H(+) = inosine + NH4(+)</text>
        <dbReference type="Rhea" id="RHEA:24408"/>
        <dbReference type="ChEBI" id="CHEBI:15377"/>
        <dbReference type="ChEBI" id="CHEBI:15378"/>
        <dbReference type="ChEBI" id="CHEBI:16335"/>
        <dbReference type="ChEBI" id="CHEBI:17596"/>
        <dbReference type="ChEBI" id="CHEBI:28938"/>
        <dbReference type="EC" id="3.5.4.4"/>
    </reaction>
    <physiologicalReaction direction="left-to-right" evidence="2">
        <dbReference type="Rhea" id="RHEA:24409"/>
    </physiologicalReaction>
</comment>
<comment type="cofactor">
    <cofactor evidence="1">
        <name>Cu(2+)</name>
        <dbReference type="ChEBI" id="CHEBI:29036"/>
    </cofactor>
    <cofactor evidence="2">
        <name>Zn(2+)</name>
        <dbReference type="ChEBI" id="CHEBI:29105"/>
    </cofactor>
</comment>
<comment type="subunit">
    <text evidence="3">Homodimer.</text>
</comment>
<comment type="similarity">
    <text evidence="5">Belongs to the purine nucleoside phosphorylase YfiH/LACC1 family.</text>
</comment>
<reference key="1">
    <citation type="journal article" date="1994" name="Gene">
        <title>Expression of the division-controlling gene ftsZ during growth and sporulation of the filamentous bacterium Streptomyces griseus.</title>
        <authorList>
            <person name="Dharmatilake A.J."/>
            <person name="Kendrick K.E."/>
        </authorList>
    </citation>
    <scope>NUCLEOTIDE SEQUENCE [GENOMIC DNA]</scope>
    <source>
        <strain>ATCC 23345 / DSM 40236 / JCM 4644 / NBRC 12875 / NCIMB 13023 / NRRL B-2682 / VKM Ac-800 / IMRU 3463</strain>
    </source>
</reference>
<accession>P45496</accession>
<name>PURNU_STRGR</name>
<evidence type="ECO:0000250" key="1">
    <source>
        <dbReference type="UniProtKB" id="P33644"/>
    </source>
</evidence>
<evidence type="ECO:0000250" key="2">
    <source>
        <dbReference type="UniProtKB" id="P84138"/>
    </source>
</evidence>
<evidence type="ECO:0000250" key="3">
    <source>
        <dbReference type="UniProtKB" id="Q1EIR0"/>
    </source>
</evidence>
<evidence type="ECO:0000303" key="4">
    <source>
    </source>
</evidence>
<evidence type="ECO:0000305" key="5"/>